<keyword id="KW-1185">Reference proteome</keyword>
<keyword id="KW-0687">Ribonucleoprotein</keyword>
<keyword id="KW-0689">Ribosomal protein</keyword>
<reference key="1">
    <citation type="journal article" date="2004" name="Proc. Natl. Acad. Sci. U.S.A.">
        <title>Genome sequence of the deep-sea gamma-proteobacterium Idiomarina loihiensis reveals amino acid fermentation as a source of carbon and energy.</title>
        <authorList>
            <person name="Hou S."/>
            <person name="Saw J.H."/>
            <person name="Lee K.S."/>
            <person name="Freitas T.A."/>
            <person name="Belisle C."/>
            <person name="Kawarabayasi Y."/>
            <person name="Donachie S.P."/>
            <person name="Pikina A."/>
            <person name="Galperin M.Y."/>
            <person name="Koonin E.V."/>
            <person name="Makarova K.S."/>
            <person name="Omelchenko M.V."/>
            <person name="Sorokin A."/>
            <person name="Wolf Y.I."/>
            <person name="Li Q.X."/>
            <person name="Keum Y.S."/>
            <person name="Campbell S."/>
            <person name="Denery J."/>
            <person name="Aizawa S."/>
            <person name="Shibata S."/>
            <person name="Malahoff A."/>
            <person name="Alam M."/>
        </authorList>
    </citation>
    <scope>NUCLEOTIDE SEQUENCE [LARGE SCALE GENOMIC DNA]</scope>
    <source>
        <strain>ATCC BAA-735 / DSM 15497 / L2-TR</strain>
    </source>
</reference>
<evidence type="ECO:0000255" key="1">
    <source>
        <dbReference type="HAMAP-Rule" id="MF_00373"/>
    </source>
</evidence>
<evidence type="ECO:0000256" key="2">
    <source>
        <dbReference type="SAM" id="MobiDB-lite"/>
    </source>
</evidence>
<evidence type="ECO:0000305" key="3"/>
<comment type="similarity">
    <text evidence="1">Belongs to the bacterial ribosomal protein bL28 family.</text>
</comment>
<feature type="chain" id="PRO_0000178484" description="Large ribosomal subunit protein bL28">
    <location>
        <begin position="1"/>
        <end position="78"/>
    </location>
</feature>
<feature type="region of interest" description="Disordered" evidence="2">
    <location>
        <begin position="1"/>
        <end position="20"/>
    </location>
</feature>
<organism>
    <name type="scientific">Idiomarina loihiensis (strain ATCC BAA-735 / DSM 15497 / L2-TR)</name>
    <dbReference type="NCBI Taxonomy" id="283942"/>
    <lineage>
        <taxon>Bacteria</taxon>
        <taxon>Pseudomonadati</taxon>
        <taxon>Pseudomonadota</taxon>
        <taxon>Gammaproteobacteria</taxon>
        <taxon>Alteromonadales</taxon>
        <taxon>Idiomarinaceae</taxon>
        <taxon>Idiomarina</taxon>
    </lineage>
</organism>
<name>RL28_IDILO</name>
<protein>
    <recommendedName>
        <fullName evidence="1">Large ribosomal subunit protein bL28</fullName>
    </recommendedName>
    <alternativeName>
        <fullName evidence="3">50S ribosomal protein L28</fullName>
    </alternativeName>
</protein>
<accession>Q5QZB3</accession>
<proteinExistence type="inferred from homology"/>
<sequence>MSQVCQVTGKRPVVGNNRSHARNATRRRFLPNLQSHRFWVESEKRWVKLRISTKGMRIIDKNGIDTVLADLRGRGVKV</sequence>
<dbReference type="EMBL" id="AE017340">
    <property type="protein sequence ID" value="AAV81084.1"/>
    <property type="molecule type" value="Genomic_DNA"/>
</dbReference>
<dbReference type="RefSeq" id="WP_011233504.1">
    <property type="nucleotide sequence ID" value="NC_006512.1"/>
</dbReference>
<dbReference type="SMR" id="Q5QZB3"/>
<dbReference type="STRING" id="283942.IL0241"/>
<dbReference type="GeneID" id="41335387"/>
<dbReference type="KEGG" id="ilo:IL0241"/>
<dbReference type="eggNOG" id="COG0227">
    <property type="taxonomic scope" value="Bacteria"/>
</dbReference>
<dbReference type="HOGENOM" id="CLU_064548_3_1_6"/>
<dbReference type="OrthoDB" id="9805609at2"/>
<dbReference type="Proteomes" id="UP000001171">
    <property type="component" value="Chromosome"/>
</dbReference>
<dbReference type="GO" id="GO:0022625">
    <property type="term" value="C:cytosolic large ribosomal subunit"/>
    <property type="evidence" value="ECO:0007669"/>
    <property type="project" value="TreeGrafter"/>
</dbReference>
<dbReference type="GO" id="GO:0003735">
    <property type="term" value="F:structural constituent of ribosome"/>
    <property type="evidence" value="ECO:0007669"/>
    <property type="project" value="InterPro"/>
</dbReference>
<dbReference type="GO" id="GO:0006412">
    <property type="term" value="P:translation"/>
    <property type="evidence" value="ECO:0007669"/>
    <property type="project" value="UniProtKB-UniRule"/>
</dbReference>
<dbReference type="FunFam" id="2.30.170.40:FF:000001">
    <property type="entry name" value="50S ribosomal protein L28"/>
    <property type="match status" value="1"/>
</dbReference>
<dbReference type="Gene3D" id="2.30.170.40">
    <property type="entry name" value="Ribosomal protein L28/L24"/>
    <property type="match status" value="1"/>
</dbReference>
<dbReference type="HAMAP" id="MF_00373">
    <property type="entry name" value="Ribosomal_bL28"/>
    <property type="match status" value="1"/>
</dbReference>
<dbReference type="InterPro" id="IPR026569">
    <property type="entry name" value="Ribosomal_bL28"/>
</dbReference>
<dbReference type="InterPro" id="IPR034704">
    <property type="entry name" value="Ribosomal_bL28/bL31-like_sf"/>
</dbReference>
<dbReference type="InterPro" id="IPR001383">
    <property type="entry name" value="Ribosomal_bL28_bact-type"/>
</dbReference>
<dbReference type="InterPro" id="IPR037147">
    <property type="entry name" value="Ribosomal_bL28_sf"/>
</dbReference>
<dbReference type="NCBIfam" id="TIGR00009">
    <property type="entry name" value="L28"/>
    <property type="match status" value="1"/>
</dbReference>
<dbReference type="PANTHER" id="PTHR13528">
    <property type="entry name" value="39S RIBOSOMAL PROTEIN L28, MITOCHONDRIAL"/>
    <property type="match status" value="1"/>
</dbReference>
<dbReference type="PANTHER" id="PTHR13528:SF2">
    <property type="entry name" value="LARGE RIBOSOMAL SUBUNIT PROTEIN BL28M"/>
    <property type="match status" value="1"/>
</dbReference>
<dbReference type="Pfam" id="PF00830">
    <property type="entry name" value="Ribosomal_L28"/>
    <property type="match status" value="1"/>
</dbReference>
<dbReference type="SUPFAM" id="SSF143800">
    <property type="entry name" value="L28p-like"/>
    <property type="match status" value="1"/>
</dbReference>
<gene>
    <name evidence="1" type="primary">rpmB</name>
    <name type="ordered locus">IL0241</name>
</gene>